<sequence length="260" mass="30184">MIKIHALEEVKGNSKEIVEKEFENLANELKEKYNAKLKYVDEDIEEDENLKFYTKIGEFEINFDNFKDYINFCLKYGADIEVIKPEKLKLTANEINEVLALVISAFKSFMDTYKIGFDVYVKEKKDIDVEGYKKGKYDEDEIADFEEEGFIRVKAVFEAIGKNENEVVKNLLISLDRDEIIINKIITKNFNENNENFNGLMAVDLLCNPFEMFEIAYKYLPVAISIQRDEIELSLADIQDIGNELSGAMFELSHAVIMRK</sequence>
<accession>Q57958</accession>
<dbReference type="EMBL" id="L77117">
    <property type="protein sequence ID" value="AAB98536.1"/>
    <property type="molecule type" value="Genomic_DNA"/>
</dbReference>
<dbReference type="PIR" id="B64367">
    <property type="entry name" value="B64367"/>
</dbReference>
<dbReference type="RefSeq" id="WP_010870042.1">
    <property type="nucleotide sequence ID" value="NC_000909.1"/>
</dbReference>
<dbReference type="FunCoup" id="Q57958">
    <property type="interactions" value="5"/>
</dbReference>
<dbReference type="STRING" id="243232.MJ_0538"/>
<dbReference type="PaxDb" id="243232-MJ_0538"/>
<dbReference type="EnsemblBacteria" id="AAB98536">
    <property type="protein sequence ID" value="AAB98536"/>
    <property type="gene ID" value="MJ_0538"/>
</dbReference>
<dbReference type="GeneID" id="1451403"/>
<dbReference type="KEGG" id="mja:MJ_0538"/>
<dbReference type="eggNOG" id="arCOG05037">
    <property type="taxonomic scope" value="Archaea"/>
</dbReference>
<dbReference type="HOGENOM" id="CLU_1076106_0_0_2"/>
<dbReference type="InParanoid" id="Q57958"/>
<dbReference type="OrthoDB" id="65227at2157"/>
<dbReference type="PhylomeDB" id="Q57958"/>
<dbReference type="Proteomes" id="UP000000805">
    <property type="component" value="Chromosome"/>
</dbReference>
<keyword id="KW-1185">Reference proteome</keyword>
<name>Y538_METJA</name>
<proteinExistence type="predicted"/>
<feature type="chain" id="PRO_0000106920" description="Uncharacterized protein MJ0538">
    <location>
        <begin position="1"/>
        <end position="260"/>
    </location>
</feature>
<reference key="1">
    <citation type="journal article" date="1996" name="Science">
        <title>Complete genome sequence of the methanogenic archaeon, Methanococcus jannaschii.</title>
        <authorList>
            <person name="Bult C.J."/>
            <person name="White O."/>
            <person name="Olsen G.J."/>
            <person name="Zhou L."/>
            <person name="Fleischmann R.D."/>
            <person name="Sutton G.G."/>
            <person name="Blake J.A."/>
            <person name="FitzGerald L.M."/>
            <person name="Clayton R.A."/>
            <person name="Gocayne J.D."/>
            <person name="Kerlavage A.R."/>
            <person name="Dougherty B.A."/>
            <person name="Tomb J.-F."/>
            <person name="Adams M.D."/>
            <person name="Reich C.I."/>
            <person name="Overbeek R."/>
            <person name="Kirkness E.F."/>
            <person name="Weinstock K.G."/>
            <person name="Merrick J.M."/>
            <person name="Glodek A."/>
            <person name="Scott J.L."/>
            <person name="Geoghagen N.S.M."/>
            <person name="Weidman J.F."/>
            <person name="Fuhrmann J.L."/>
            <person name="Nguyen D."/>
            <person name="Utterback T.R."/>
            <person name="Kelley J.M."/>
            <person name="Peterson J.D."/>
            <person name="Sadow P.W."/>
            <person name="Hanna M.C."/>
            <person name="Cotton M.D."/>
            <person name="Roberts K.M."/>
            <person name="Hurst M.A."/>
            <person name="Kaine B.P."/>
            <person name="Borodovsky M."/>
            <person name="Klenk H.-P."/>
            <person name="Fraser C.M."/>
            <person name="Smith H.O."/>
            <person name="Woese C.R."/>
            <person name="Venter J.C."/>
        </authorList>
    </citation>
    <scope>NUCLEOTIDE SEQUENCE [LARGE SCALE GENOMIC DNA]</scope>
    <source>
        <strain>ATCC 43067 / DSM 2661 / JAL-1 / JCM 10045 / NBRC 100440</strain>
    </source>
</reference>
<gene>
    <name type="ordered locus">MJ0538</name>
</gene>
<protein>
    <recommendedName>
        <fullName>Uncharacterized protein MJ0538</fullName>
    </recommendedName>
</protein>
<organism>
    <name type="scientific">Methanocaldococcus jannaschii (strain ATCC 43067 / DSM 2661 / JAL-1 / JCM 10045 / NBRC 100440)</name>
    <name type="common">Methanococcus jannaschii</name>
    <dbReference type="NCBI Taxonomy" id="243232"/>
    <lineage>
        <taxon>Archaea</taxon>
        <taxon>Methanobacteriati</taxon>
        <taxon>Methanobacteriota</taxon>
        <taxon>Methanomada group</taxon>
        <taxon>Methanococci</taxon>
        <taxon>Methanococcales</taxon>
        <taxon>Methanocaldococcaceae</taxon>
        <taxon>Methanocaldococcus</taxon>
    </lineage>
</organism>